<reference key="1">
    <citation type="submission" date="2007-03" db="EMBL/GenBank/DDBJ databases">
        <title>Annotation of Culex pipiens quinquefasciatus.</title>
        <authorList>
            <consortium name="The Broad Institute Genome Sequencing Platform"/>
            <person name="Atkinson P.W."/>
            <person name="Hemingway J."/>
            <person name="Christensen B.M."/>
            <person name="Higgs S."/>
            <person name="Kodira C.D."/>
            <person name="Hannick L.I."/>
            <person name="Megy K."/>
            <person name="O'Leary S.B."/>
            <person name="Pearson M."/>
            <person name="Haas B.J."/>
            <person name="Mauceli E."/>
            <person name="Wortman J.R."/>
            <person name="Lee N.H."/>
            <person name="Guigo R."/>
            <person name="Stanke M."/>
            <person name="Alvarado L."/>
            <person name="Amedeo P."/>
            <person name="Antoine C.H."/>
            <person name="Arensburger P."/>
            <person name="Bidwell S.L."/>
            <person name="Crawford M."/>
            <person name="Camaro F."/>
            <person name="Devon K."/>
            <person name="Engels R."/>
            <person name="Hammond M."/>
            <person name="Howarth C."/>
            <person name="Koehrsen M."/>
            <person name="Lawson D."/>
            <person name="Montgomery P."/>
            <person name="Nene V."/>
            <person name="Nusbaum C."/>
            <person name="Puiu D."/>
            <person name="Romero-Severson J."/>
            <person name="Severson D.W."/>
            <person name="Shumway M."/>
            <person name="Sisk P."/>
            <person name="Stolte C."/>
            <person name="Zeng Q."/>
            <person name="Eisenstadt E."/>
            <person name="Fraser-Liggett C.M."/>
            <person name="Strausberg R."/>
            <person name="Galagan J."/>
            <person name="Birren B."/>
            <person name="Collins F.H."/>
        </authorList>
    </citation>
    <scope>NUCLEOTIDE SEQUENCE [LARGE SCALE GENOMIC DNA]</scope>
    <source>
        <strain>JHB</strain>
    </source>
</reference>
<comment type="function">
    <text evidence="1">Lyase that catalyzes the C1-decarboxylation of 4-hydroxy-3-methoxy-5-(all-trans-polyprenyl)benzoic acid into 2-methoxy-6-(all-trans-polyprenyl)phenol during ubiquinone biosynthesis.</text>
</comment>
<comment type="catalytic activity">
    <reaction evidence="1">
        <text>a 4-hydroxy-3-methoxy-5-(all-trans-polyprenyl)benzoate + H(+) = a 2-methoxy-6-(all-trans-polyprenyl)phenol + CO2</text>
        <dbReference type="Rhea" id="RHEA:81179"/>
        <dbReference type="Rhea" id="RHEA-COMP:9551"/>
        <dbReference type="Rhea" id="RHEA-COMP:10931"/>
        <dbReference type="ChEBI" id="CHEBI:15378"/>
        <dbReference type="ChEBI" id="CHEBI:16526"/>
        <dbReference type="ChEBI" id="CHEBI:62731"/>
        <dbReference type="ChEBI" id="CHEBI:84443"/>
        <dbReference type="EC" id="4.1.1.130"/>
    </reaction>
</comment>
<comment type="cofactor">
    <cofactor evidence="1">
        <name>Zn(2+)</name>
        <dbReference type="ChEBI" id="CHEBI:29105"/>
    </cofactor>
</comment>
<comment type="pathway">
    <text evidence="1">Cofactor biosynthesis; ubiquinone biosynthesis.</text>
</comment>
<comment type="subunit">
    <text evidence="1">Component of a multi-subunit COQ enzyme complex.</text>
</comment>
<comment type="subcellular location">
    <subcellularLocation>
        <location evidence="1">Mitochondrion inner membrane</location>
        <topology evidence="1">Peripheral membrane protein</topology>
        <orientation evidence="1">Matrix side</orientation>
    </subcellularLocation>
</comment>
<comment type="similarity">
    <text evidence="1">Belongs to the COQ4 family.</text>
</comment>
<keyword id="KW-0456">Lyase</keyword>
<keyword id="KW-0472">Membrane</keyword>
<keyword id="KW-0479">Metal-binding</keyword>
<keyword id="KW-0496">Mitochondrion</keyword>
<keyword id="KW-0999">Mitochondrion inner membrane</keyword>
<keyword id="KW-1185">Reference proteome</keyword>
<keyword id="KW-0809">Transit peptide</keyword>
<keyword id="KW-0831">Ubiquinone biosynthesis</keyword>
<keyword id="KW-0862">Zinc</keyword>
<gene>
    <name type="ORF">CPIJ019881</name>
</gene>
<evidence type="ECO:0000255" key="1">
    <source>
        <dbReference type="HAMAP-Rule" id="MF_03111"/>
    </source>
</evidence>
<evidence type="ECO:0000256" key="2">
    <source>
        <dbReference type="SAM" id="MobiDB-lite"/>
    </source>
</evidence>
<sequence length="223" mass="24925">MFLRRVHPVRLGHAIQRSLTTTKSRNESTTTTVEAPQAVPSPPPDAFTEEFLRNQIKVTELQRVILGVGSSLAALVNPRRHDMIACLGETTGVPALDAIRRQMLASDEGRQILADRPRINTRTVDMAALKALPETSFGHQYVHFLEKHDITPDSRAEVRFMDDPELAYVMTRYREVHDLVHTVLGMPTNMLGEVAVKWVEALNTGLPMCYGGAVFGAFRLRPK</sequence>
<accession>B0XLA4</accession>
<name>COQ42_CULQU</name>
<organism>
    <name type="scientific">Culex quinquefasciatus</name>
    <name type="common">Southern house mosquito</name>
    <name type="synonym">Culex pungens</name>
    <dbReference type="NCBI Taxonomy" id="7176"/>
    <lineage>
        <taxon>Eukaryota</taxon>
        <taxon>Metazoa</taxon>
        <taxon>Ecdysozoa</taxon>
        <taxon>Arthropoda</taxon>
        <taxon>Hexapoda</taxon>
        <taxon>Insecta</taxon>
        <taxon>Pterygota</taxon>
        <taxon>Neoptera</taxon>
        <taxon>Endopterygota</taxon>
        <taxon>Diptera</taxon>
        <taxon>Nematocera</taxon>
        <taxon>Culicoidea</taxon>
        <taxon>Culicidae</taxon>
        <taxon>Culicinae</taxon>
        <taxon>Culicini</taxon>
        <taxon>Culex</taxon>
        <taxon>Culex</taxon>
    </lineage>
</organism>
<protein>
    <recommendedName>
        <fullName>Ubiquinone biosynthesis protein COQ4 homolog 2, mitochondrial</fullName>
    </recommendedName>
    <alternativeName>
        <fullName>4-hydroxy-3-methoxy-5-polyprenylbenzoate decarboxylase</fullName>
        <ecNumber evidence="1">4.1.1.130</ecNumber>
    </alternativeName>
    <alternativeName>
        <fullName evidence="1">Coenzyme Q biosynthesis protein 4 homolog 2</fullName>
    </alternativeName>
</protein>
<feature type="transit peptide" description="Mitochondrion" evidence="1">
    <location>
        <begin position="1"/>
        <end position="26"/>
    </location>
</feature>
<feature type="chain" id="PRO_0000388060" description="Ubiquinone biosynthesis protein COQ4 homolog 2, mitochondrial">
    <location>
        <begin position="27"/>
        <end position="223"/>
    </location>
</feature>
<feature type="region of interest" description="Disordered" evidence="2">
    <location>
        <begin position="21"/>
        <end position="43"/>
    </location>
</feature>
<feature type="compositionally biased region" description="Low complexity" evidence="2">
    <location>
        <begin position="21"/>
        <end position="32"/>
    </location>
</feature>
<feature type="binding site" evidence="1">
    <location>
        <position position="177"/>
    </location>
    <ligand>
        <name>Zn(2+)</name>
        <dbReference type="ChEBI" id="CHEBI:29105"/>
    </ligand>
</feature>
<feature type="binding site" evidence="1">
    <location>
        <position position="178"/>
    </location>
    <ligand>
        <name>Zn(2+)</name>
        <dbReference type="ChEBI" id="CHEBI:29105"/>
    </ligand>
</feature>
<feature type="binding site" evidence="1">
    <location>
        <position position="181"/>
    </location>
    <ligand>
        <name>Zn(2+)</name>
        <dbReference type="ChEBI" id="CHEBI:29105"/>
    </ligand>
</feature>
<feature type="binding site" evidence="1">
    <location>
        <position position="193"/>
    </location>
    <ligand>
        <name>Zn(2+)</name>
        <dbReference type="ChEBI" id="CHEBI:29105"/>
    </ligand>
</feature>
<proteinExistence type="inferred from homology"/>
<dbReference type="EC" id="4.1.1.130" evidence="1"/>
<dbReference type="EMBL" id="DS234376">
    <property type="protein sequence ID" value="EDS33774.1"/>
    <property type="molecule type" value="Genomic_DNA"/>
</dbReference>
<dbReference type="RefSeq" id="XP_001870426.1">
    <property type="nucleotide sequence ID" value="XM_001870391.1"/>
</dbReference>
<dbReference type="SMR" id="B0XLA4"/>
<dbReference type="FunCoup" id="B0XLA4">
    <property type="interactions" value="719"/>
</dbReference>
<dbReference type="STRING" id="7176.B0XLA4"/>
<dbReference type="EnsemblMetazoa" id="CPIJ019881-RA">
    <property type="protein sequence ID" value="CPIJ019881-PA"/>
    <property type="gene ID" value="CPIJ019881"/>
</dbReference>
<dbReference type="KEGG" id="cqu:CpipJ_CPIJ019881"/>
<dbReference type="VEuPathDB" id="VectorBase:CPIJ019881"/>
<dbReference type="VEuPathDB" id="VectorBase:CQUJHB006863"/>
<dbReference type="eggNOG" id="KOG3244">
    <property type="taxonomic scope" value="Eukaryota"/>
</dbReference>
<dbReference type="HOGENOM" id="CLU_061241_1_1_1"/>
<dbReference type="InParanoid" id="B0XLA4"/>
<dbReference type="OMA" id="XERPRIS"/>
<dbReference type="OrthoDB" id="417037at2759"/>
<dbReference type="PhylomeDB" id="B0XLA4"/>
<dbReference type="UniPathway" id="UPA00232"/>
<dbReference type="Proteomes" id="UP000002320">
    <property type="component" value="Unassembled WGS sequence"/>
</dbReference>
<dbReference type="GO" id="GO:0031314">
    <property type="term" value="C:extrinsic component of mitochondrial inner membrane"/>
    <property type="evidence" value="ECO:0007669"/>
    <property type="project" value="UniProtKB-UniRule"/>
</dbReference>
<dbReference type="GO" id="GO:0006744">
    <property type="term" value="P:ubiquinone biosynthetic process"/>
    <property type="evidence" value="ECO:0007669"/>
    <property type="project" value="UniProtKB-UniRule"/>
</dbReference>
<dbReference type="HAMAP" id="MF_03111">
    <property type="entry name" value="Coq4"/>
    <property type="match status" value="1"/>
</dbReference>
<dbReference type="InterPro" id="IPR007715">
    <property type="entry name" value="Coq4"/>
</dbReference>
<dbReference type="InterPro" id="IPR027540">
    <property type="entry name" value="Coq4_euk"/>
</dbReference>
<dbReference type="PANTHER" id="PTHR12922">
    <property type="entry name" value="UBIQUINONE BIOSYNTHESIS PROTEIN"/>
    <property type="match status" value="1"/>
</dbReference>
<dbReference type="PANTHER" id="PTHR12922:SF7">
    <property type="entry name" value="UBIQUINONE BIOSYNTHESIS PROTEIN COQ4 HOMOLOG, MITOCHONDRIAL"/>
    <property type="match status" value="1"/>
</dbReference>
<dbReference type="Pfam" id="PF05019">
    <property type="entry name" value="Coq4"/>
    <property type="match status" value="1"/>
</dbReference>